<accession>Q0UBQ5</accession>
<keyword id="KW-0539">Nucleus</keyword>
<keyword id="KW-0687">Ribonucleoprotein</keyword>
<keyword id="KW-0690">Ribosome biogenesis</keyword>
<keyword id="KW-0698">rRNA processing</keyword>
<feature type="chain" id="PRO_0000320382" description="Nucleolar protein 16">
    <location>
        <begin position="1"/>
        <end position="236"/>
    </location>
</feature>
<feature type="region of interest" description="Disordered" evidence="2">
    <location>
        <begin position="1"/>
        <end position="28"/>
    </location>
</feature>
<feature type="region of interest" description="Disordered" evidence="2">
    <location>
        <begin position="206"/>
        <end position="236"/>
    </location>
</feature>
<feature type="compositionally biased region" description="Basic residues" evidence="2">
    <location>
        <begin position="8"/>
        <end position="27"/>
    </location>
</feature>
<comment type="function">
    <text evidence="1">Involved in the biogenesis of the 60S ribosomal subunit.</text>
</comment>
<comment type="subunit">
    <text evidence="1">Component of the pre-66S ribosomal particle.</text>
</comment>
<comment type="subcellular location">
    <subcellularLocation>
        <location evidence="1">Nucleus</location>
        <location evidence="1">Nucleolus</location>
    </subcellularLocation>
</comment>
<comment type="similarity">
    <text evidence="3">Belongs to the NOP16 family.</text>
</comment>
<comment type="sequence caution" evidence="3">
    <conflict type="erroneous gene model prediction">
        <sequence resource="EMBL-CDS" id="EAT82203"/>
    </conflict>
</comment>
<comment type="sequence caution" evidence="3">
    <conflict type="frameshift">
        <sequence resource="EMBL-CDS" id="EAT82203"/>
    </conflict>
</comment>
<proteinExistence type="inferred from homology"/>
<name>NOP16_PHANO</name>
<sequence>MGRELQKAKNKSSIPKKRQKGPSKKKILQNPIIAKHWNQKETLSQNYRRLGLTSRLNHATGGQEKTIALLGLNDPKSSRADIAAGSTANALNIVSKAPQTIDVEELEVERDPETGAILRVIGQKEETANPLNDPLNELDDDEADEWDGFAMVPEHGEQEQVNPVIRELEEAAKNGERKAPRKQSQREEEWLERLVARYGDDYGRMARDRKLNPMQQTEADIKKRVKKWQASQASQA</sequence>
<reference key="1">
    <citation type="journal article" date="2007" name="Plant Cell">
        <title>Dothideomycete-plant interactions illuminated by genome sequencing and EST analysis of the wheat pathogen Stagonospora nodorum.</title>
        <authorList>
            <person name="Hane J.K."/>
            <person name="Lowe R.G.T."/>
            <person name="Solomon P.S."/>
            <person name="Tan K.-C."/>
            <person name="Schoch C.L."/>
            <person name="Spatafora J.W."/>
            <person name="Crous P.W."/>
            <person name="Kodira C.D."/>
            <person name="Birren B.W."/>
            <person name="Galagan J.E."/>
            <person name="Torriani S.F.F."/>
            <person name="McDonald B.A."/>
            <person name="Oliver R.P."/>
        </authorList>
    </citation>
    <scope>NUCLEOTIDE SEQUENCE [LARGE SCALE GENOMIC DNA]</scope>
    <source>
        <strain>SN15 / ATCC MYA-4574 / FGSC 10173</strain>
    </source>
</reference>
<organism>
    <name type="scientific">Phaeosphaeria nodorum (strain SN15 / ATCC MYA-4574 / FGSC 10173)</name>
    <name type="common">Glume blotch fungus</name>
    <name type="synonym">Parastagonospora nodorum</name>
    <dbReference type="NCBI Taxonomy" id="321614"/>
    <lineage>
        <taxon>Eukaryota</taxon>
        <taxon>Fungi</taxon>
        <taxon>Dikarya</taxon>
        <taxon>Ascomycota</taxon>
        <taxon>Pezizomycotina</taxon>
        <taxon>Dothideomycetes</taxon>
        <taxon>Pleosporomycetidae</taxon>
        <taxon>Pleosporales</taxon>
        <taxon>Pleosporineae</taxon>
        <taxon>Phaeosphaeriaceae</taxon>
        <taxon>Parastagonospora</taxon>
    </lineage>
</organism>
<evidence type="ECO:0000250" key="1"/>
<evidence type="ECO:0000256" key="2">
    <source>
        <dbReference type="SAM" id="MobiDB-lite"/>
    </source>
</evidence>
<evidence type="ECO:0000305" key="3"/>
<protein>
    <recommendedName>
        <fullName>Nucleolar protein 16</fullName>
    </recommendedName>
</protein>
<gene>
    <name type="primary">NOP16</name>
    <name type="ORF">SNOG_10809</name>
</gene>
<dbReference type="EMBL" id="CH445341">
    <property type="protein sequence ID" value="EAT82203.2"/>
    <property type="status" value="ALT_SEQ"/>
    <property type="molecule type" value="Genomic_DNA"/>
</dbReference>
<dbReference type="RefSeq" id="XP_001801068.1">
    <property type="nucleotide sequence ID" value="XM_001801016.1"/>
</dbReference>
<dbReference type="SMR" id="Q0UBQ5"/>
<dbReference type="FunCoup" id="Q0UBQ5">
    <property type="interactions" value="233"/>
</dbReference>
<dbReference type="STRING" id="321614.Q0UBQ5"/>
<dbReference type="GeneID" id="5977975"/>
<dbReference type="KEGG" id="pno:SNOG_10809"/>
<dbReference type="VEuPathDB" id="FungiDB:JI435_108090"/>
<dbReference type="eggNOG" id="KOG4771">
    <property type="taxonomic scope" value="Eukaryota"/>
</dbReference>
<dbReference type="InParanoid" id="Q0UBQ5"/>
<dbReference type="OrthoDB" id="285729at2759"/>
<dbReference type="Proteomes" id="UP000001055">
    <property type="component" value="Unassembled WGS sequence"/>
</dbReference>
<dbReference type="GO" id="GO:0005730">
    <property type="term" value="C:nucleolus"/>
    <property type="evidence" value="ECO:0000318"/>
    <property type="project" value="GO_Central"/>
</dbReference>
<dbReference type="GO" id="GO:1990904">
    <property type="term" value="C:ribonucleoprotein complex"/>
    <property type="evidence" value="ECO:0007669"/>
    <property type="project" value="UniProtKB-KW"/>
</dbReference>
<dbReference type="GO" id="GO:0042273">
    <property type="term" value="P:ribosomal large subunit biogenesis"/>
    <property type="evidence" value="ECO:0000318"/>
    <property type="project" value="GO_Central"/>
</dbReference>
<dbReference type="GO" id="GO:0006364">
    <property type="term" value="P:rRNA processing"/>
    <property type="evidence" value="ECO:0007669"/>
    <property type="project" value="UniProtKB-KW"/>
</dbReference>
<dbReference type="InterPro" id="IPR019002">
    <property type="entry name" value="Ribosome_biogenesis_Nop16"/>
</dbReference>
<dbReference type="PANTHER" id="PTHR13243">
    <property type="entry name" value="HSPC111 PROTEIN-RELATED"/>
    <property type="match status" value="1"/>
</dbReference>
<dbReference type="PANTHER" id="PTHR13243:SF1">
    <property type="entry name" value="NUCLEOLAR PROTEIN 16"/>
    <property type="match status" value="1"/>
</dbReference>
<dbReference type="Pfam" id="PF09420">
    <property type="entry name" value="Nop16"/>
    <property type="match status" value="1"/>
</dbReference>